<feature type="chain" id="PRO_0000320850" description="Protein translocase subunit SecA">
    <location>
        <begin position="1"/>
        <end position="908"/>
    </location>
</feature>
<feature type="region of interest" description="Disordered" evidence="2">
    <location>
        <begin position="860"/>
        <end position="898"/>
    </location>
</feature>
<feature type="binding site" evidence="1">
    <location>
        <position position="87"/>
    </location>
    <ligand>
        <name>ATP</name>
        <dbReference type="ChEBI" id="CHEBI:30616"/>
    </ligand>
</feature>
<feature type="binding site" evidence="1">
    <location>
        <begin position="105"/>
        <end position="109"/>
    </location>
    <ligand>
        <name>ATP</name>
        <dbReference type="ChEBI" id="CHEBI:30616"/>
    </ligand>
</feature>
<feature type="binding site" evidence="1">
    <location>
        <position position="507"/>
    </location>
    <ligand>
        <name>ATP</name>
        <dbReference type="ChEBI" id="CHEBI:30616"/>
    </ligand>
</feature>
<feature type="binding site" evidence="1">
    <location>
        <position position="892"/>
    </location>
    <ligand>
        <name>Zn(2+)</name>
        <dbReference type="ChEBI" id="CHEBI:29105"/>
    </ligand>
</feature>
<feature type="binding site" evidence="1">
    <location>
        <position position="894"/>
    </location>
    <ligand>
        <name>Zn(2+)</name>
        <dbReference type="ChEBI" id="CHEBI:29105"/>
    </ligand>
</feature>
<feature type="binding site" evidence="1">
    <location>
        <position position="903"/>
    </location>
    <ligand>
        <name>Zn(2+)</name>
        <dbReference type="ChEBI" id="CHEBI:29105"/>
    </ligand>
</feature>
<feature type="binding site" evidence="1">
    <location>
        <position position="904"/>
    </location>
    <ligand>
        <name>Zn(2+)</name>
        <dbReference type="ChEBI" id="CHEBI:29105"/>
    </ligand>
</feature>
<name>SECA_METFK</name>
<accession>Q1GZ36</accession>
<reference key="1">
    <citation type="submission" date="2006-03" db="EMBL/GenBank/DDBJ databases">
        <title>Complete sequence of Methylobacillus flagellatus KT.</title>
        <authorList>
            <consortium name="US DOE Joint Genome Institute"/>
            <person name="Copeland A."/>
            <person name="Lucas S."/>
            <person name="Lapidus A."/>
            <person name="Barry K."/>
            <person name="Detter J.C."/>
            <person name="Glavina del Rio T."/>
            <person name="Hammon N."/>
            <person name="Israni S."/>
            <person name="Dalin E."/>
            <person name="Tice H."/>
            <person name="Pitluck S."/>
            <person name="Brettin T."/>
            <person name="Bruce D."/>
            <person name="Han C."/>
            <person name="Tapia R."/>
            <person name="Saunders E."/>
            <person name="Gilna P."/>
            <person name="Schmutz J."/>
            <person name="Larimer F."/>
            <person name="Land M."/>
            <person name="Kyrpides N."/>
            <person name="Anderson I."/>
            <person name="Richardson P."/>
        </authorList>
    </citation>
    <scope>NUCLEOTIDE SEQUENCE [LARGE SCALE GENOMIC DNA]</scope>
    <source>
        <strain>ATCC 51484 / DSM 6875 / VKM B-1610 / KT</strain>
    </source>
</reference>
<comment type="function">
    <text evidence="1">Part of the Sec protein translocase complex. Interacts with the SecYEG preprotein conducting channel. Has a central role in coupling the hydrolysis of ATP to the transfer of proteins into and across the cell membrane, serving both as a receptor for the preprotein-SecB complex and as an ATP-driven molecular motor driving the stepwise translocation of polypeptide chains across the membrane.</text>
</comment>
<comment type="catalytic activity">
    <reaction evidence="1">
        <text>ATP + H2O + cellular proteinSide 1 = ADP + phosphate + cellular proteinSide 2.</text>
        <dbReference type="EC" id="7.4.2.8"/>
    </reaction>
</comment>
<comment type="cofactor">
    <cofactor evidence="1">
        <name>Zn(2+)</name>
        <dbReference type="ChEBI" id="CHEBI:29105"/>
    </cofactor>
    <text evidence="1">May bind 1 zinc ion per subunit.</text>
</comment>
<comment type="subunit">
    <text evidence="1">Monomer and homodimer. Part of the essential Sec protein translocation apparatus which comprises SecA, SecYEG and auxiliary proteins SecDF-YajC and YidC.</text>
</comment>
<comment type="subcellular location">
    <subcellularLocation>
        <location evidence="1">Cell inner membrane</location>
        <topology evidence="1">Peripheral membrane protein</topology>
        <orientation evidence="1">Cytoplasmic side</orientation>
    </subcellularLocation>
    <subcellularLocation>
        <location evidence="1">Cytoplasm</location>
    </subcellularLocation>
    <text evidence="1">Distribution is 50-50.</text>
</comment>
<comment type="similarity">
    <text evidence="1">Belongs to the SecA family.</text>
</comment>
<proteinExistence type="inferred from homology"/>
<protein>
    <recommendedName>
        <fullName evidence="1">Protein translocase subunit SecA</fullName>
        <ecNumber evidence="1">7.4.2.8</ecNumber>
    </recommendedName>
</protein>
<evidence type="ECO:0000255" key="1">
    <source>
        <dbReference type="HAMAP-Rule" id="MF_01382"/>
    </source>
</evidence>
<evidence type="ECO:0000256" key="2">
    <source>
        <dbReference type="SAM" id="MobiDB-lite"/>
    </source>
</evidence>
<keyword id="KW-0067">ATP-binding</keyword>
<keyword id="KW-0997">Cell inner membrane</keyword>
<keyword id="KW-1003">Cell membrane</keyword>
<keyword id="KW-0963">Cytoplasm</keyword>
<keyword id="KW-0472">Membrane</keyword>
<keyword id="KW-0479">Metal-binding</keyword>
<keyword id="KW-0547">Nucleotide-binding</keyword>
<keyword id="KW-0653">Protein transport</keyword>
<keyword id="KW-1185">Reference proteome</keyword>
<keyword id="KW-1278">Translocase</keyword>
<keyword id="KW-0811">Translocation</keyword>
<keyword id="KW-0813">Transport</keyword>
<keyword id="KW-0862">Zinc</keyword>
<organism>
    <name type="scientific">Methylobacillus flagellatus (strain ATCC 51484 / DSM 6875 / VKM B-1610 / KT)</name>
    <dbReference type="NCBI Taxonomy" id="265072"/>
    <lineage>
        <taxon>Bacteria</taxon>
        <taxon>Pseudomonadati</taxon>
        <taxon>Pseudomonadota</taxon>
        <taxon>Betaproteobacteria</taxon>
        <taxon>Nitrosomonadales</taxon>
        <taxon>Methylophilaceae</taxon>
        <taxon>Methylobacillus</taxon>
    </lineage>
</organism>
<sequence>MLSALFKKIFGSRNERLVKQYAQNVKAINALEPSMQALTDEQLRAKTEEFKQRYQQGESLEKILPEAFAVVREGGRRVLNMRHFDVQLIGGMVLHAGKIAEMRTGEGKTLVATLPAYLNALTGKGVHVVTVNDYLARRDAEWMSRLYNFLGLSVGINLSQMPHGEKQKAYAADITYGTNNEFGFDYLRDNMVFTAEERVQRGLNYALVDEVDSILIDEARTPLIISGQADDSVDLYLQMNSIAAKLVRQEKEDGEGDFWVDEKSHQVLLSEQGHEHAEALLAEAGLLAEGSSLYDAANISLVHHMYAALRAQSLYHRDQHYVVRDGEIVIVDEFTGRMMAGRRWSDGLHQAVEAKEGVTIQKENQTLASITFQNYFRMYGKLSGMTGTADTEAYEFNQIYGLETVVIPTHRPLQRKDYMDKVYRTAKEKYQAVIDDIKECQKRGQPVLVGTTSIENSELISKVLSEAKLEHQVLNAKQHEREAHIIAQAGRPGMITIATNMAGRGTDIVLGGNPEGEIAEIEADEQLSEADKAARIAALKADWQVKHDAVLAAGGLHIIGTERHESRRVDNQLRGRAGRQGDPGSSRFYLSLEDQLLRIFASDRVGAIMERLKMPEGEAIEHPWVTRAIENAQRKVEGRNFDIRKQLLEYDDVANDQRKVIYQQRNELLEAADVGETIAAMRVDVIHDLIATYIPPESLEEQWDVPGLEKALQADLGLEIPLQKMLEENPNLHEETLREHIVEAANAAYKAKEEQASAPVLRQFERAVMLQSLDNHWREHLAALDHLRQGIHLRSYAQKNPKQEYKREAFALFSSMLDTVKREVTQVTMLVKVQSEADVEAVEKHPELENVQYQHADFDEALGNAEESDEASDQSVKTFERAGAKVGRNDPCPCGSGKKYKQCHGKLS</sequence>
<gene>
    <name evidence="1" type="primary">secA</name>
    <name type="ordered locus">Mfla_2234</name>
</gene>
<dbReference type="EC" id="7.4.2.8" evidence="1"/>
<dbReference type="EMBL" id="CP000284">
    <property type="protein sequence ID" value="ABE50501.1"/>
    <property type="molecule type" value="Genomic_DNA"/>
</dbReference>
<dbReference type="RefSeq" id="WP_011480455.1">
    <property type="nucleotide sequence ID" value="NC_007947.1"/>
</dbReference>
<dbReference type="SMR" id="Q1GZ36"/>
<dbReference type="STRING" id="265072.Mfla_2234"/>
<dbReference type="KEGG" id="mfa:Mfla_2234"/>
<dbReference type="eggNOG" id="COG0653">
    <property type="taxonomic scope" value="Bacteria"/>
</dbReference>
<dbReference type="HOGENOM" id="CLU_005314_3_0_4"/>
<dbReference type="OrthoDB" id="9805579at2"/>
<dbReference type="Proteomes" id="UP000002440">
    <property type="component" value="Chromosome"/>
</dbReference>
<dbReference type="GO" id="GO:0031522">
    <property type="term" value="C:cell envelope Sec protein transport complex"/>
    <property type="evidence" value="ECO:0007669"/>
    <property type="project" value="TreeGrafter"/>
</dbReference>
<dbReference type="GO" id="GO:0005829">
    <property type="term" value="C:cytosol"/>
    <property type="evidence" value="ECO:0007669"/>
    <property type="project" value="TreeGrafter"/>
</dbReference>
<dbReference type="GO" id="GO:0005886">
    <property type="term" value="C:plasma membrane"/>
    <property type="evidence" value="ECO:0007669"/>
    <property type="project" value="UniProtKB-SubCell"/>
</dbReference>
<dbReference type="GO" id="GO:0005524">
    <property type="term" value="F:ATP binding"/>
    <property type="evidence" value="ECO:0007669"/>
    <property type="project" value="UniProtKB-UniRule"/>
</dbReference>
<dbReference type="GO" id="GO:0046872">
    <property type="term" value="F:metal ion binding"/>
    <property type="evidence" value="ECO:0007669"/>
    <property type="project" value="UniProtKB-KW"/>
</dbReference>
<dbReference type="GO" id="GO:0008564">
    <property type="term" value="F:protein-exporting ATPase activity"/>
    <property type="evidence" value="ECO:0007669"/>
    <property type="project" value="UniProtKB-EC"/>
</dbReference>
<dbReference type="GO" id="GO:0065002">
    <property type="term" value="P:intracellular protein transmembrane transport"/>
    <property type="evidence" value="ECO:0007669"/>
    <property type="project" value="UniProtKB-UniRule"/>
</dbReference>
<dbReference type="GO" id="GO:0017038">
    <property type="term" value="P:protein import"/>
    <property type="evidence" value="ECO:0007669"/>
    <property type="project" value="InterPro"/>
</dbReference>
<dbReference type="GO" id="GO:0006605">
    <property type="term" value="P:protein targeting"/>
    <property type="evidence" value="ECO:0007669"/>
    <property type="project" value="UniProtKB-UniRule"/>
</dbReference>
<dbReference type="GO" id="GO:0043952">
    <property type="term" value="P:protein transport by the Sec complex"/>
    <property type="evidence" value="ECO:0007669"/>
    <property type="project" value="TreeGrafter"/>
</dbReference>
<dbReference type="CDD" id="cd17928">
    <property type="entry name" value="DEXDc_SecA"/>
    <property type="match status" value="1"/>
</dbReference>
<dbReference type="CDD" id="cd18803">
    <property type="entry name" value="SF2_C_secA"/>
    <property type="match status" value="1"/>
</dbReference>
<dbReference type="FunFam" id="3.40.50.300:FF:000081">
    <property type="entry name" value="Preprotein translocase subunit SecA"/>
    <property type="match status" value="1"/>
</dbReference>
<dbReference type="FunFam" id="3.40.50.300:FF:000113">
    <property type="entry name" value="Preprotein translocase subunit SecA"/>
    <property type="match status" value="1"/>
</dbReference>
<dbReference type="FunFam" id="3.90.1440.10:FF:000001">
    <property type="entry name" value="Preprotein translocase subunit SecA"/>
    <property type="match status" value="1"/>
</dbReference>
<dbReference type="FunFam" id="1.10.3060.10:FF:000003">
    <property type="entry name" value="Protein translocase subunit SecA"/>
    <property type="match status" value="1"/>
</dbReference>
<dbReference type="Gene3D" id="1.10.3060.10">
    <property type="entry name" value="Helical scaffold and wing domains of SecA"/>
    <property type="match status" value="1"/>
</dbReference>
<dbReference type="Gene3D" id="3.40.50.300">
    <property type="entry name" value="P-loop containing nucleotide triphosphate hydrolases"/>
    <property type="match status" value="2"/>
</dbReference>
<dbReference type="Gene3D" id="3.90.1440.10">
    <property type="entry name" value="SecA, preprotein cross-linking domain"/>
    <property type="match status" value="1"/>
</dbReference>
<dbReference type="HAMAP" id="MF_01382">
    <property type="entry name" value="SecA"/>
    <property type="match status" value="1"/>
</dbReference>
<dbReference type="InterPro" id="IPR014001">
    <property type="entry name" value="Helicase_ATP-bd"/>
</dbReference>
<dbReference type="InterPro" id="IPR001650">
    <property type="entry name" value="Helicase_C-like"/>
</dbReference>
<dbReference type="InterPro" id="IPR027417">
    <property type="entry name" value="P-loop_NTPase"/>
</dbReference>
<dbReference type="InterPro" id="IPR004027">
    <property type="entry name" value="SEC_C_motif"/>
</dbReference>
<dbReference type="InterPro" id="IPR000185">
    <property type="entry name" value="SecA"/>
</dbReference>
<dbReference type="InterPro" id="IPR020937">
    <property type="entry name" value="SecA_CS"/>
</dbReference>
<dbReference type="InterPro" id="IPR011115">
    <property type="entry name" value="SecA_DEAD"/>
</dbReference>
<dbReference type="InterPro" id="IPR014018">
    <property type="entry name" value="SecA_motor_DEAD"/>
</dbReference>
<dbReference type="InterPro" id="IPR011130">
    <property type="entry name" value="SecA_preprotein_X-link_dom"/>
</dbReference>
<dbReference type="InterPro" id="IPR044722">
    <property type="entry name" value="SecA_SF2_C"/>
</dbReference>
<dbReference type="InterPro" id="IPR011116">
    <property type="entry name" value="SecA_Wing/Scaffold"/>
</dbReference>
<dbReference type="InterPro" id="IPR036266">
    <property type="entry name" value="SecA_Wing/Scaffold_sf"/>
</dbReference>
<dbReference type="InterPro" id="IPR036670">
    <property type="entry name" value="SecA_X-link_sf"/>
</dbReference>
<dbReference type="NCBIfam" id="NF009538">
    <property type="entry name" value="PRK12904.1"/>
    <property type="match status" value="1"/>
</dbReference>
<dbReference type="NCBIfam" id="TIGR00963">
    <property type="entry name" value="secA"/>
    <property type="match status" value="1"/>
</dbReference>
<dbReference type="PANTHER" id="PTHR30612:SF0">
    <property type="entry name" value="CHLOROPLAST PROTEIN-TRANSPORTING ATPASE"/>
    <property type="match status" value="1"/>
</dbReference>
<dbReference type="PANTHER" id="PTHR30612">
    <property type="entry name" value="SECA INNER MEMBRANE COMPONENT OF SEC PROTEIN SECRETION SYSTEM"/>
    <property type="match status" value="1"/>
</dbReference>
<dbReference type="Pfam" id="PF21090">
    <property type="entry name" value="P-loop_SecA"/>
    <property type="match status" value="1"/>
</dbReference>
<dbReference type="Pfam" id="PF02810">
    <property type="entry name" value="SEC-C"/>
    <property type="match status" value="1"/>
</dbReference>
<dbReference type="Pfam" id="PF07517">
    <property type="entry name" value="SecA_DEAD"/>
    <property type="match status" value="1"/>
</dbReference>
<dbReference type="Pfam" id="PF01043">
    <property type="entry name" value="SecA_PP_bind"/>
    <property type="match status" value="1"/>
</dbReference>
<dbReference type="Pfam" id="PF07516">
    <property type="entry name" value="SecA_SW"/>
    <property type="match status" value="1"/>
</dbReference>
<dbReference type="PRINTS" id="PR00906">
    <property type="entry name" value="SECA"/>
</dbReference>
<dbReference type="SMART" id="SM00957">
    <property type="entry name" value="SecA_DEAD"/>
    <property type="match status" value="1"/>
</dbReference>
<dbReference type="SMART" id="SM00958">
    <property type="entry name" value="SecA_PP_bind"/>
    <property type="match status" value="1"/>
</dbReference>
<dbReference type="SUPFAM" id="SSF81886">
    <property type="entry name" value="Helical scaffold and wing domains of SecA"/>
    <property type="match status" value="1"/>
</dbReference>
<dbReference type="SUPFAM" id="SSF52540">
    <property type="entry name" value="P-loop containing nucleoside triphosphate hydrolases"/>
    <property type="match status" value="2"/>
</dbReference>
<dbReference type="SUPFAM" id="SSF81767">
    <property type="entry name" value="Pre-protein crosslinking domain of SecA"/>
    <property type="match status" value="1"/>
</dbReference>
<dbReference type="PROSITE" id="PS01312">
    <property type="entry name" value="SECA"/>
    <property type="match status" value="1"/>
</dbReference>
<dbReference type="PROSITE" id="PS51196">
    <property type="entry name" value="SECA_MOTOR_DEAD"/>
    <property type="match status" value="1"/>
</dbReference>